<sequence>MREKWVRAFAGVFCAMLLIGCSKSDRPQMGNAGGAEGGDFVVGMVTDSGDIDDKSFNQQVWEGISRFAQENNAKCKYVTASTDAEYVPSLSAFADENMGLVVACGSFLVEAVIETSARFPKQKFLVIDAVVQDRDNVVSAVFGQNEGSFLVGVAAALKAKEAGKSAVGFIVGMELGMMPLFEAGFEAGVKAVDPDIQVVVEVANTFSDPQKGQALAAKLYDSGVNVIFQVAGGTGNGVIKEARDRRLNGQDVWVIGVDRDQYMDGVYDGSKSVVLTSMVKRADVAAERISKMAYDGSFPGGQSIMFGLEDKAVGIPEENPNLSSAVMEKIRSFEEKIVSKEIVVPVRSARMMN</sequence>
<accession>P29724</accession>
<accession>O83339</accession>
<comment type="function">
    <text evidence="2">Binds purine nucleosides and may play a role in purine nucleoside uptake. May be part of an ABC-type nucleoside uptake system. Has highest affinity for guanosine, followed by inosine and adenosine. Has very low affinity for cytidine and does not bind thymidine.</text>
</comment>
<comment type="subunit">
    <text evidence="2">Monomer.</text>
</comment>
<comment type="subcellular location">
    <subcellularLocation>
        <location evidence="4">Cell membrane</location>
        <topology evidence="4">Lipid-anchor</topology>
    </subcellularLocation>
</comment>
<comment type="induction">
    <text evidence="2">Encoded in an operon with TP_0320, TP_0321, TP_0322 and TP_0323 that may code for an ABC-type nucleoside uptake system, with TP_0322 and/or TP_0323 encoding putative permeases, and TP_0319 encoding a ligand-binding protein.</text>
</comment>
<comment type="similarity">
    <text evidence="4">Belongs to the BMP lipoprotein family.</text>
</comment>
<feature type="signal peptide">
    <location>
        <begin position="1"/>
        <end position="20"/>
    </location>
</feature>
<feature type="chain" id="PRO_0000018007" description="Membrane lipoprotein TmpC">
    <location>
        <begin position="21"/>
        <end position="353"/>
    </location>
</feature>
<feature type="binding site" evidence="2 8">
    <location>
        <begin position="47"/>
        <end position="48"/>
    </location>
    <ligand>
        <name>adenosine</name>
        <dbReference type="ChEBI" id="CHEBI:16335"/>
    </ligand>
</feature>
<feature type="binding site" evidence="2 7">
    <location>
        <position position="47"/>
    </location>
    <ligand>
        <name>guanosine</name>
        <dbReference type="ChEBI" id="CHEBI:16750"/>
    </ligand>
</feature>
<feature type="binding site" evidence="2 6">
    <location>
        <position position="47"/>
    </location>
    <ligand>
        <name>inosine</name>
        <dbReference type="ChEBI" id="CHEBI:17596"/>
    </ligand>
</feature>
<feature type="binding site" evidence="2 8">
    <location>
        <position position="56"/>
    </location>
    <ligand>
        <name>adenosine</name>
        <dbReference type="ChEBI" id="CHEBI:16335"/>
    </ligand>
</feature>
<feature type="binding site" evidence="2 7">
    <location>
        <position position="57"/>
    </location>
    <ligand>
        <name>guanosine</name>
        <dbReference type="ChEBI" id="CHEBI:16750"/>
    </ligand>
</feature>
<feature type="binding site" evidence="2 6">
    <location>
        <position position="57"/>
    </location>
    <ligand>
        <name>inosine</name>
        <dbReference type="ChEBI" id="CHEBI:17596"/>
    </ligand>
</feature>
<feature type="binding site" evidence="2 8">
    <location>
        <position position="128"/>
    </location>
    <ligand>
        <name>adenosine</name>
        <dbReference type="ChEBI" id="CHEBI:16335"/>
    </ligand>
</feature>
<feature type="binding site" evidence="2 7">
    <location>
        <position position="128"/>
    </location>
    <ligand>
        <name>guanosine</name>
        <dbReference type="ChEBI" id="CHEBI:16750"/>
    </ligand>
</feature>
<feature type="binding site" evidence="2 6">
    <location>
        <position position="128"/>
    </location>
    <ligand>
        <name>inosine</name>
        <dbReference type="ChEBI" id="CHEBI:17596"/>
    </ligand>
</feature>
<feature type="binding site" evidence="2 8">
    <location>
        <position position="206"/>
    </location>
    <ligand>
        <name>adenosine</name>
        <dbReference type="ChEBI" id="CHEBI:16335"/>
    </ligand>
</feature>
<feature type="binding site" evidence="2 7">
    <location>
        <position position="206"/>
    </location>
    <ligand>
        <name>guanosine</name>
        <dbReference type="ChEBI" id="CHEBI:16750"/>
    </ligand>
</feature>
<feature type="binding site" evidence="2 8">
    <location>
        <position position="232"/>
    </location>
    <ligand>
        <name>adenosine</name>
        <dbReference type="ChEBI" id="CHEBI:16335"/>
    </ligand>
</feature>
<feature type="binding site" evidence="2 7">
    <location>
        <position position="232"/>
    </location>
    <ligand>
        <name>guanosine</name>
        <dbReference type="ChEBI" id="CHEBI:16750"/>
    </ligand>
</feature>
<feature type="binding site" evidence="2 6">
    <location>
        <position position="232"/>
    </location>
    <ligand>
        <name>inosine</name>
        <dbReference type="ChEBI" id="CHEBI:17596"/>
    </ligand>
</feature>
<feature type="binding site" evidence="2 8">
    <location>
        <position position="258"/>
    </location>
    <ligand>
        <name>adenosine</name>
        <dbReference type="ChEBI" id="CHEBI:16335"/>
    </ligand>
</feature>
<feature type="binding site" evidence="2 7">
    <location>
        <position position="258"/>
    </location>
    <ligand>
        <name>guanosine</name>
        <dbReference type="ChEBI" id="CHEBI:16750"/>
    </ligand>
</feature>
<feature type="binding site" evidence="2 6">
    <location>
        <position position="258"/>
    </location>
    <ligand>
        <name>inosine</name>
        <dbReference type="ChEBI" id="CHEBI:17596"/>
    </ligand>
</feature>
<feature type="binding site" evidence="2 8">
    <location>
        <position position="280"/>
    </location>
    <ligand>
        <name>adenosine</name>
        <dbReference type="ChEBI" id="CHEBI:16335"/>
    </ligand>
</feature>
<feature type="binding site" evidence="2 7">
    <location>
        <position position="280"/>
    </location>
    <ligand>
        <name>guanosine</name>
        <dbReference type="ChEBI" id="CHEBI:16750"/>
    </ligand>
</feature>
<feature type="binding site" evidence="2 6">
    <location>
        <position position="280"/>
    </location>
    <ligand>
        <name>inosine</name>
        <dbReference type="ChEBI" id="CHEBI:17596"/>
    </ligand>
</feature>
<feature type="lipid moiety-binding region" description="N-palmitoyl cysteine" evidence="1 3">
    <location>
        <position position="21"/>
    </location>
</feature>
<feature type="lipid moiety-binding region" description="S-diacylglycerol cysteine" evidence="5">
    <location>
        <position position="21"/>
    </location>
</feature>
<feature type="mutagenesis site" description="Loss of lipid incorporation and cleavage at alternative processing site." evidence="3">
    <original>C</original>
    <variation>S</variation>
    <location>
        <position position="21"/>
    </location>
</feature>
<feature type="sequence conflict" description="In Ref. 1; CAA40968." evidence="4" ref="1">
    <original>G</original>
    <variation>A</variation>
    <location>
        <position position="11"/>
    </location>
</feature>
<feature type="sequence conflict" description="In Ref. 1; CAA40968." evidence="4" ref="1">
    <original>A</original>
    <variation>R</variation>
    <location>
        <position position="159"/>
    </location>
</feature>
<feature type="strand" evidence="9">
    <location>
        <begin position="41"/>
        <end position="49"/>
    </location>
</feature>
<feature type="strand" evidence="9">
    <location>
        <begin position="53"/>
        <end position="55"/>
    </location>
</feature>
<feature type="helix" evidence="9">
    <location>
        <begin position="56"/>
        <end position="70"/>
    </location>
</feature>
<feature type="strand" evidence="9">
    <location>
        <begin position="74"/>
        <end position="79"/>
    </location>
</feature>
<feature type="helix" evidence="9">
    <location>
        <begin position="83"/>
        <end position="85"/>
    </location>
</feature>
<feature type="helix" evidence="9">
    <location>
        <begin position="86"/>
        <end position="95"/>
    </location>
</feature>
<feature type="strand" evidence="9">
    <location>
        <begin position="99"/>
        <end position="105"/>
    </location>
</feature>
<feature type="turn" evidence="9">
    <location>
        <begin position="106"/>
        <end position="108"/>
    </location>
</feature>
<feature type="helix" evidence="9">
    <location>
        <begin position="109"/>
        <end position="118"/>
    </location>
</feature>
<feature type="strand" evidence="9">
    <location>
        <begin position="124"/>
        <end position="129"/>
    </location>
</feature>
<feature type="strand" evidence="9">
    <location>
        <begin position="137"/>
        <end position="142"/>
    </location>
</feature>
<feature type="helix" evidence="9">
    <location>
        <begin position="144"/>
        <end position="161"/>
    </location>
</feature>
<feature type="strand" evidence="9">
    <location>
        <begin position="166"/>
        <end position="172"/>
    </location>
</feature>
<feature type="turn" evidence="9">
    <location>
        <begin position="176"/>
        <end position="178"/>
    </location>
</feature>
<feature type="helix" evidence="9">
    <location>
        <begin position="179"/>
        <end position="192"/>
    </location>
</feature>
<feature type="strand" evidence="9">
    <location>
        <begin position="197"/>
        <end position="202"/>
    </location>
</feature>
<feature type="helix" evidence="9">
    <location>
        <begin position="209"/>
        <end position="221"/>
    </location>
</feature>
<feature type="strand" evidence="9">
    <location>
        <begin position="226"/>
        <end position="230"/>
    </location>
</feature>
<feature type="helix" evidence="9">
    <location>
        <begin position="232"/>
        <end position="234"/>
    </location>
</feature>
<feature type="helix" evidence="9">
    <location>
        <begin position="235"/>
        <end position="247"/>
    </location>
</feature>
<feature type="strand" evidence="9">
    <location>
        <begin position="253"/>
        <end position="259"/>
    </location>
</feature>
<feature type="helix" evidence="9">
    <location>
        <begin position="262"/>
        <end position="265"/>
    </location>
</feature>
<feature type="strand" evidence="9">
    <location>
        <begin position="268"/>
        <end position="270"/>
    </location>
</feature>
<feature type="strand" evidence="9">
    <location>
        <begin position="272"/>
        <end position="280"/>
    </location>
</feature>
<feature type="helix" evidence="9">
    <location>
        <begin position="282"/>
        <end position="294"/>
    </location>
</feature>
<feature type="strand" evidence="9">
    <location>
        <begin position="303"/>
        <end position="306"/>
    </location>
</feature>
<feature type="turn" evidence="9">
    <location>
        <begin position="308"/>
        <end position="311"/>
    </location>
</feature>
<feature type="strand" evidence="9">
    <location>
        <begin position="312"/>
        <end position="314"/>
    </location>
</feature>
<feature type="helix" evidence="9">
    <location>
        <begin position="324"/>
        <end position="338"/>
    </location>
</feature>
<feature type="helix" evidence="9">
    <location>
        <begin position="349"/>
        <end position="351"/>
    </location>
</feature>
<keyword id="KW-0002">3D-structure</keyword>
<keyword id="KW-1003">Cell membrane</keyword>
<keyword id="KW-0903">Direct protein sequencing</keyword>
<keyword id="KW-0449">Lipoprotein</keyword>
<keyword id="KW-0472">Membrane</keyword>
<keyword id="KW-0564">Palmitate</keyword>
<keyword id="KW-1185">Reference proteome</keyword>
<keyword id="KW-0732">Signal</keyword>
<keyword id="KW-0813">Transport</keyword>
<name>TMPC_TREPA</name>
<reference key="1">
    <citation type="journal article" date="1991" name="Infect. Immun.">
        <title>Characterization of the 35-kilodalton Treponema pallidum subsp. pallidum recombinant lipoprotein TmpC and antibody response to lipidated and nonlipidated T. pallidum antigens.</title>
        <authorList>
            <person name="Schouls L.M."/>
            <person name="van der Heide H.G.J."/>
            <person name="van Embden J.D.A."/>
        </authorList>
    </citation>
    <scope>NUCLEOTIDE SEQUENCE [GENOMIC DNA]</scope>
    <scope>MUTAGENESIS OF CYS-21</scope>
    <scope>DIACYLGLYCEROL AT CYS-21</scope>
    <scope>PALMITOYLATION AT CYS-21</scope>
    <source>
        <strain>Nichols</strain>
    </source>
</reference>
<reference key="2">
    <citation type="journal article" date="1998" name="Science">
        <title>Complete genome sequence of Treponema pallidum, the syphilis spirochete.</title>
        <authorList>
            <person name="Fraser C.M."/>
            <person name="Norris S.J."/>
            <person name="Weinstock G.M."/>
            <person name="White O."/>
            <person name="Sutton G.G."/>
            <person name="Dodson R.J."/>
            <person name="Gwinn M.L."/>
            <person name="Hickey E.K."/>
            <person name="Clayton R.A."/>
            <person name="Ketchum K.A."/>
            <person name="Sodergren E."/>
            <person name="Hardham J.M."/>
            <person name="McLeod M.P."/>
            <person name="Salzberg S.L."/>
            <person name="Peterson J.D."/>
            <person name="Khalak H.G."/>
            <person name="Richardson D.L."/>
            <person name="Howell J.K."/>
            <person name="Chidambaram M."/>
            <person name="Utterback T.R."/>
            <person name="McDonald L.A."/>
            <person name="Artiach P."/>
            <person name="Bowman C."/>
            <person name="Cotton M.D."/>
            <person name="Fujii C."/>
            <person name="Garland S.A."/>
            <person name="Hatch B."/>
            <person name="Horst K."/>
            <person name="Roberts K.M."/>
            <person name="Sandusky M."/>
            <person name="Weidman J.F."/>
            <person name="Smith H.O."/>
            <person name="Venter J.C."/>
        </authorList>
    </citation>
    <scope>NUCLEOTIDE SEQUENCE [LARGE SCALE GENOMIC DNA]</scope>
    <source>
        <strain>Nichols</strain>
    </source>
</reference>
<reference key="3">
    <citation type="journal article" date="2006" name="J. Biol. Chem.">
        <title>The PnrA (Tp0319; TmpC) lipoprotein represents a new family of bacterial purine nucleoside receptor encoded within an ATP-binding cassette (ABC)-like operon in Treponema pallidum.</title>
        <authorList>
            <person name="Deka R.K."/>
            <person name="Brautigam C.A."/>
            <person name="Yang X.F."/>
            <person name="Blevins J.S."/>
            <person name="Machius M."/>
            <person name="Tomchick D.R."/>
            <person name="Norgard M.V."/>
        </authorList>
    </citation>
    <scope>X-RAY CRYSTALLOGRAPHY (1.7 ANGSTROMS) OF 36-353 IN COMPLEXES WITH ADENOSINE; INOSINE AND GUANOSINE</scope>
    <scope>PARTIAL PROTEIN SEQUENCE</scope>
    <scope>FUNCTION</scope>
    <scope>INDUCTION</scope>
    <scope>SUBUNIT</scope>
</reference>
<protein>
    <recommendedName>
        <fullName>Membrane lipoprotein TmpC</fullName>
        <shortName>Membrane protein C</shortName>
    </recommendedName>
    <alternativeName>
        <fullName>35 kDa antigen</fullName>
    </alternativeName>
    <alternativeName>
        <fullName>Lipoprotein TpN35</fullName>
    </alternativeName>
    <alternativeName>
        <fullName>Purine nucleoside receptor A</fullName>
        <shortName>PnrA</shortName>
    </alternativeName>
</protein>
<evidence type="ECO:0000255" key="1">
    <source>
        <dbReference type="PROSITE-ProRule" id="PRU00303"/>
    </source>
</evidence>
<evidence type="ECO:0000269" key="2">
    <source>
    </source>
</evidence>
<evidence type="ECO:0000269" key="3">
    <source>
    </source>
</evidence>
<evidence type="ECO:0000305" key="4"/>
<evidence type="ECO:0000305" key="5">
    <source>
    </source>
</evidence>
<evidence type="ECO:0007744" key="6">
    <source>
        <dbReference type="PDB" id="2FQW"/>
    </source>
</evidence>
<evidence type="ECO:0007744" key="7">
    <source>
        <dbReference type="PDB" id="2FQX"/>
    </source>
</evidence>
<evidence type="ECO:0007744" key="8">
    <source>
        <dbReference type="PDB" id="2FQY"/>
    </source>
</evidence>
<evidence type="ECO:0007829" key="9">
    <source>
        <dbReference type="PDB" id="2FQX"/>
    </source>
</evidence>
<gene>
    <name type="primary">tmpC</name>
    <name type="ordered locus">TP_0319</name>
</gene>
<dbReference type="EMBL" id="X57836">
    <property type="protein sequence ID" value="CAA40968.1"/>
    <property type="molecule type" value="Genomic_DNA"/>
</dbReference>
<dbReference type="EMBL" id="AE000520">
    <property type="protein sequence ID" value="AAC65302.1"/>
    <property type="molecule type" value="Genomic_DNA"/>
</dbReference>
<dbReference type="PIR" id="H71340">
    <property type="entry name" value="H71340"/>
</dbReference>
<dbReference type="RefSeq" id="WP_010881767.1">
    <property type="nucleotide sequence ID" value="NC_021490.2"/>
</dbReference>
<dbReference type="PDB" id="2FQW">
    <property type="method" value="X-ray"/>
    <property type="resolution" value="1.71 A"/>
    <property type="chains" value="A=36-353"/>
</dbReference>
<dbReference type="PDB" id="2FQX">
    <property type="method" value="X-ray"/>
    <property type="resolution" value="1.70 A"/>
    <property type="chains" value="A=36-353"/>
</dbReference>
<dbReference type="PDB" id="2FQY">
    <property type="method" value="X-ray"/>
    <property type="resolution" value="1.90 A"/>
    <property type="chains" value="A=36-353"/>
</dbReference>
<dbReference type="PDBsum" id="2FQW"/>
<dbReference type="PDBsum" id="2FQX"/>
<dbReference type="PDBsum" id="2FQY"/>
<dbReference type="SMR" id="P29724"/>
<dbReference type="STRING" id="243276.TP_0319"/>
<dbReference type="TCDB" id="3.A.1.2.10">
    <property type="family name" value="the atp-binding cassette (abc) superfamily"/>
</dbReference>
<dbReference type="EnsemblBacteria" id="AAC65302">
    <property type="protein sequence ID" value="AAC65302"/>
    <property type="gene ID" value="TP_0319"/>
</dbReference>
<dbReference type="GeneID" id="93876101"/>
<dbReference type="KEGG" id="tpa:TP_0319"/>
<dbReference type="KEGG" id="tpw:TPANIC_0319"/>
<dbReference type="eggNOG" id="COG1744">
    <property type="taxonomic scope" value="Bacteria"/>
</dbReference>
<dbReference type="HOGENOM" id="CLU_038813_0_0_12"/>
<dbReference type="OrthoDB" id="9769871at2"/>
<dbReference type="EvolutionaryTrace" id="P29724"/>
<dbReference type="Proteomes" id="UP000000811">
    <property type="component" value="Chromosome"/>
</dbReference>
<dbReference type="GO" id="GO:0005886">
    <property type="term" value="C:plasma membrane"/>
    <property type="evidence" value="ECO:0007669"/>
    <property type="project" value="UniProtKB-SubCell"/>
</dbReference>
<dbReference type="CDD" id="cd01391">
    <property type="entry name" value="Periplasmic_Binding_Protein_type1"/>
    <property type="match status" value="1"/>
</dbReference>
<dbReference type="Gene3D" id="3.40.50.2300">
    <property type="match status" value="2"/>
</dbReference>
<dbReference type="InterPro" id="IPR050957">
    <property type="entry name" value="BMP_lipoprotein"/>
</dbReference>
<dbReference type="InterPro" id="IPR028082">
    <property type="entry name" value="Peripla_BP_I"/>
</dbReference>
<dbReference type="InterPro" id="IPR003760">
    <property type="entry name" value="PnrA-like"/>
</dbReference>
<dbReference type="PANTHER" id="PTHR34296:SF2">
    <property type="entry name" value="ABC TRANSPORTER GUANOSINE-BINDING PROTEIN NUPN"/>
    <property type="match status" value="1"/>
</dbReference>
<dbReference type="PANTHER" id="PTHR34296">
    <property type="entry name" value="TRANSCRIPTIONAL ACTIVATOR PROTEIN MED"/>
    <property type="match status" value="1"/>
</dbReference>
<dbReference type="Pfam" id="PF02608">
    <property type="entry name" value="Bmp"/>
    <property type="match status" value="1"/>
</dbReference>
<dbReference type="SUPFAM" id="SSF53822">
    <property type="entry name" value="Periplasmic binding protein-like I"/>
    <property type="match status" value="1"/>
</dbReference>
<dbReference type="PROSITE" id="PS51257">
    <property type="entry name" value="PROKAR_LIPOPROTEIN"/>
    <property type="match status" value="1"/>
</dbReference>
<organism>
    <name type="scientific">Treponema pallidum (strain Nichols)</name>
    <dbReference type="NCBI Taxonomy" id="243276"/>
    <lineage>
        <taxon>Bacteria</taxon>
        <taxon>Pseudomonadati</taxon>
        <taxon>Spirochaetota</taxon>
        <taxon>Spirochaetia</taxon>
        <taxon>Spirochaetales</taxon>
        <taxon>Treponemataceae</taxon>
        <taxon>Treponema</taxon>
    </lineage>
</organism>
<proteinExistence type="evidence at protein level"/>